<sequence length="371" mass="41413">MATSAAFLKGDFKRTGKMELSDEQKSQMWINSVNSENKEALLAWVKETGIELVQINGQRKYGGPPPGWIGNAPVSGSEVFIGKIPQDIYEDKLIPLFQSVGKLYEFRLMMTFSGLNRGFAYARYISRRQAISAIMSLNGFEITKGCCIVVCRSTEKSELALDGLPGNFDENMLKNVLDEVTSGVSSISLHPSPTKESQVLAVVKYDSHRAAAMAKKTLCEGSPILPGLPLTVNWLKTDMRQKLRSTDKLQQTKDLSPLPLLYTDRPDLPKETLLSAVGCLNMLCQEMKLGRPVFLIKLFSVTSFGWIRFWYQVVIPTYPTPFCGYAWMIGENLELNEKYEHARQVVAMKILSALGYIPDFSLGDVTARNAL</sequence>
<gene>
    <name type="primary">dnd1</name>
</gene>
<comment type="function">
    <text evidence="1">RNA-binding factor that positively regulates gene expression by prohibiting miRNA-mediated gene suppression. Relieves miRNA repression in germline cells. Prohibits the function of several miRNAs by blocking the accessibility of target mRNAs. Sequence-specific RNA-binding factor that binds to U-rich regions (URRs) in the 3'untranslated region (3'-UTR) of several mRNAs. Does not bind to miRNAs. May play a role during early embryonic survival (By similarity).</text>
</comment>
<comment type="subcellular location">
    <subcellularLocation>
        <location evidence="1">Nucleus</location>
    </subcellularLocation>
    <subcellularLocation>
        <location evidence="1">Cytoplasm</location>
    </subcellularLocation>
    <text evidence="1">Perinuclear germ granules, also called germ plasm or chromatoid body.</text>
</comment>
<comment type="developmental stage">
    <text>Expressed in germ cells; along the cleavage planes at the vegetal pole of early cleavage stage embryos.</text>
</comment>
<comment type="sequence caution" evidence="3">
    <conflict type="erroneous initiation">
        <sequence resource="EMBL-CDS" id="AAH78132"/>
    </conflict>
</comment>
<reference key="1">
    <citation type="submission" date="2004-07" db="EMBL/GenBank/DDBJ databases">
        <authorList>
            <consortium name="NIH - Xenopus Gene Collection (XGC) project"/>
        </authorList>
    </citation>
    <scope>NUCLEOTIDE SEQUENCE [LARGE SCALE MRNA]</scope>
    <source>
        <tissue>Oocyte</tissue>
    </source>
</reference>
<reference key="2">
    <citation type="journal article" date="2003" name="Curr. Biol.">
        <title>Dead end, a novel vertebrate germ plasm component, is required for zebrafish primordial germ cell migration and survival.</title>
        <authorList>
            <person name="Weidinger G."/>
            <person name="Stebler J."/>
            <person name="Slanchev K."/>
            <person name="Dumstrei K."/>
            <person name="Wise C."/>
            <person name="Lovell-Badge R."/>
            <person name="Thisse C."/>
            <person name="Thisse B."/>
            <person name="Raz E."/>
        </authorList>
    </citation>
    <scope>NUCLEOTIDE SEQUENCE [MRNA] OF 18-371</scope>
</reference>
<feature type="chain" id="PRO_0000081571" description="Dead end protein homolog 1">
    <location>
        <begin position="1"/>
        <end position="371"/>
    </location>
</feature>
<feature type="domain" description="RRM 1" evidence="2">
    <location>
        <begin position="85"/>
        <end position="163"/>
    </location>
</feature>
<feature type="domain" description="RRM 2" evidence="2">
    <location>
        <begin position="165"/>
        <end position="245"/>
    </location>
</feature>
<feature type="sequence conflict" description="In Ref. 2; AAQ63637." evidence="3" ref="2">
    <original>K</original>
    <variation>R</variation>
    <location>
        <position position="270"/>
    </location>
</feature>
<organism>
    <name type="scientific">Xenopus laevis</name>
    <name type="common">African clawed frog</name>
    <dbReference type="NCBI Taxonomy" id="8355"/>
    <lineage>
        <taxon>Eukaryota</taxon>
        <taxon>Metazoa</taxon>
        <taxon>Chordata</taxon>
        <taxon>Craniata</taxon>
        <taxon>Vertebrata</taxon>
        <taxon>Euteleostomi</taxon>
        <taxon>Amphibia</taxon>
        <taxon>Batrachia</taxon>
        <taxon>Anura</taxon>
        <taxon>Pipoidea</taxon>
        <taxon>Pipidae</taxon>
        <taxon>Xenopodinae</taxon>
        <taxon>Xenopus</taxon>
        <taxon>Xenopus</taxon>
    </lineage>
</organism>
<keyword id="KW-0963">Cytoplasm</keyword>
<keyword id="KW-0217">Developmental protein</keyword>
<keyword id="KW-0539">Nucleus</keyword>
<keyword id="KW-1185">Reference proteome</keyword>
<keyword id="KW-0677">Repeat</keyword>
<keyword id="KW-0694">RNA-binding</keyword>
<evidence type="ECO:0000250" key="1"/>
<evidence type="ECO:0000255" key="2">
    <source>
        <dbReference type="PROSITE-ProRule" id="PRU00176"/>
    </source>
</evidence>
<evidence type="ECO:0000305" key="3"/>
<name>DND1_XENLA</name>
<accession>Q6DCB7</accession>
<accession>Q6VXX9</accession>
<protein>
    <recommendedName>
        <fullName>Dead end protein homolog 1</fullName>
    </recommendedName>
</protein>
<proteinExistence type="evidence at transcript level"/>
<dbReference type="EMBL" id="BC078132">
    <property type="protein sequence ID" value="AAH78132.1"/>
    <property type="status" value="ALT_INIT"/>
    <property type="molecule type" value="mRNA"/>
</dbReference>
<dbReference type="EMBL" id="AY321494">
    <property type="protein sequence ID" value="AAQ63637.1"/>
    <property type="molecule type" value="mRNA"/>
</dbReference>
<dbReference type="SMR" id="Q6DCB7"/>
<dbReference type="IntAct" id="Q6DCB7">
    <property type="interactions" value="1"/>
</dbReference>
<dbReference type="AGR" id="Xenbase:XB-GENE-1015636"/>
<dbReference type="Xenbase" id="XB-GENE-1015636">
    <property type="gene designation" value="dnd1.L"/>
</dbReference>
<dbReference type="Proteomes" id="UP000186698">
    <property type="component" value="Unplaced"/>
</dbReference>
<dbReference type="GO" id="GO:0005737">
    <property type="term" value="C:cytoplasm"/>
    <property type="evidence" value="ECO:0000250"/>
    <property type="project" value="UniProtKB"/>
</dbReference>
<dbReference type="GO" id="GO:0005634">
    <property type="term" value="C:nucleus"/>
    <property type="evidence" value="ECO:0000250"/>
    <property type="project" value="UniProtKB"/>
</dbReference>
<dbReference type="GO" id="GO:0003730">
    <property type="term" value="F:mRNA 3'-UTR binding"/>
    <property type="evidence" value="ECO:0000250"/>
    <property type="project" value="UniProtKB"/>
</dbReference>
<dbReference type="GO" id="GO:0003729">
    <property type="term" value="F:mRNA binding"/>
    <property type="evidence" value="ECO:0000318"/>
    <property type="project" value="GO_Central"/>
</dbReference>
<dbReference type="GO" id="GO:0007281">
    <property type="term" value="P:germ cell development"/>
    <property type="evidence" value="ECO:0007669"/>
    <property type="project" value="InterPro"/>
</dbReference>
<dbReference type="GO" id="GO:0048255">
    <property type="term" value="P:mRNA stabilization"/>
    <property type="evidence" value="ECO:0000318"/>
    <property type="project" value="GO_Central"/>
</dbReference>
<dbReference type="GO" id="GO:0060965">
    <property type="term" value="P:negative regulation of miRNA-mediated gene silencing"/>
    <property type="evidence" value="ECO:0000250"/>
    <property type="project" value="UniProtKB"/>
</dbReference>
<dbReference type="CDD" id="cd20313">
    <property type="entry name" value="DSRM_DND1"/>
    <property type="match status" value="1"/>
</dbReference>
<dbReference type="CDD" id="cd12487">
    <property type="entry name" value="RRM1_DND1"/>
    <property type="match status" value="1"/>
</dbReference>
<dbReference type="CDD" id="cd12493">
    <property type="entry name" value="RRM2_DND1"/>
    <property type="match status" value="1"/>
</dbReference>
<dbReference type="FunFam" id="3.30.70.330:FF:000370">
    <property type="entry name" value="Dead end protein homolog 1"/>
    <property type="match status" value="1"/>
</dbReference>
<dbReference type="Gene3D" id="3.30.70.330">
    <property type="match status" value="2"/>
</dbReference>
<dbReference type="InterPro" id="IPR044448">
    <property type="entry name" value="DND1_DSRM"/>
</dbReference>
<dbReference type="InterPro" id="IPR034414">
    <property type="entry name" value="DND1_RRM1"/>
</dbReference>
<dbReference type="InterPro" id="IPR012677">
    <property type="entry name" value="Nucleotide-bd_a/b_plait_sf"/>
</dbReference>
<dbReference type="InterPro" id="IPR035979">
    <property type="entry name" value="RBD_domain_sf"/>
</dbReference>
<dbReference type="InterPro" id="IPR000504">
    <property type="entry name" value="RRM_dom"/>
</dbReference>
<dbReference type="PANTHER" id="PTHR21245">
    <property type="entry name" value="HETEROGENEOUS NUCLEAR RIBONUCLEOPROTEIN"/>
    <property type="match status" value="1"/>
</dbReference>
<dbReference type="Pfam" id="PF14709">
    <property type="entry name" value="DND1_DSRM"/>
    <property type="match status" value="1"/>
</dbReference>
<dbReference type="Pfam" id="PF00076">
    <property type="entry name" value="RRM_1"/>
    <property type="match status" value="1"/>
</dbReference>
<dbReference type="SMART" id="SM00360">
    <property type="entry name" value="RRM"/>
    <property type="match status" value="2"/>
</dbReference>
<dbReference type="SUPFAM" id="SSF54928">
    <property type="entry name" value="RNA-binding domain, RBD"/>
    <property type="match status" value="1"/>
</dbReference>
<dbReference type="PROSITE" id="PS50102">
    <property type="entry name" value="RRM"/>
    <property type="match status" value="1"/>
</dbReference>